<protein>
    <recommendedName>
        <fullName>Ras-like protein rasS</fullName>
        <ecNumber evidence="2">3.6.5.2</ecNumber>
    </recommendedName>
</protein>
<dbReference type="EC" id="3.6.5.2" evidence="2"/>
<dbReference type="EMBL" id="Z14134">
    <property type="protein sequence ID" value="CAA78508.1"/>
    <property type="molecule type" value="mRNA"/>
</dbReference>
<dbReference type="EMBL" id="AAFI02000055">
    <property type="protein sequence ID" value="EAL65646.1"/>
    <property type="molecule type" value="Genomic_DNA"/>
</dbReference>
<dbReference type="PIR" id="S31410">
    <property type="entry name" value="S31410"/>
</dbReference>
<dbReference type="RefSeq" id="XP_639024.1">
    <property type="nucleotide sequence ID" value="XM_633932.1"/>
</dbReference>
<dbReference type="SMR" id="P32254"/>
<dbReference type="FunCoup" id="P32254">
    <property type="interactions" value="8"/>
</dbReference>
<dbReference type="IntAct" id="P32254">
    <property type="interactions" value="1"/>
</dbReference>
<dbReference type="STRING" id="44689.P32254"/>
<dbReference type="PaxDb" id="44689-DDB0191147"/>
<dbReference type="EnsemblProtists" id="EAL65646">
    <property type="protein sequence ID" value="EAL65646"/>
    <property type="gene ID" value="DDB_G0283537"/>
</dbReference>
<dbReference type="GeneID" id="8624152"/>
<dbReference type="KEGG" id="ddi:DDB_G0283537"/>
<dbReference type="dictyBase" id="DDB_G0283537">
    <property type="gene designation" value="rasS"/>
</dbReference>
<dbReference type="VEuPathDB" id="AmoebaDB:DDB_G0283537"/>
<dbReference type="eggNOG" id="KOG0395">
    <property type="taxonomic scope" value="Eukaryota"/>
</dbReference>
<dbReference type="HOGENOM" id="CLU_041217_9_8_1"/>
<dbReference type="InParanoid" id="P32254"/>
<dbReference type="OMA" id="GCPCILL"/>
<dbReference type="PhylomeDB" id="P32254"/>
<dbReference type="PRO" id="PR:P32254"/>
<dbReference type="Proteomes" id="UP000002195">
    <property type="component" value="Chromosome 4"/>
</dbReference>
<dbReference type="GO" id="GO:0005886">
    <property type="term" value="C:plasma membrane"/>
    <property type="evidence" value="ECO:0000318"/>
    <property type="project" value="GO_Central"/>
</dbReference>
<dbReference type="GO" id="GO:0003925">
    <property type="term" value="F:G protein activity"/>
    <property type="evidence" value="ECO:0007669"/>
    <property type="project" value="UniProtKB-EC"/>
</dbReference>
<dbReference type="GO" id="GO:0019003">
    <property type="term" value="F:GDP binding"/>
    <property type="evidence" value="ECO:0000318"/>
    <property type="project" value="GO_Central"/>
</dbReference>
<dbReference type="GO" id="GO:0005525">
    <property type="term" value="F:GTP binding"/>
    <property type="evidence" value="ECO:0000250"/>
    <property type="project" value="dictyBase"/>
</dbReference>
<dbReference type="GO" id="GO:0003924">
    <property type="term" value="F:GTPase activity"/>
    <property type="evidence" value="ECO:0000318"/>
    <property type="project" value="GO_Central"/>
</dbReference>
<dbReference type="GO" id="GO:0043548">
    <property type="term" value="F:phosphatidylinositol 3-kinase binding"/>
    <property type="evidence" value="ECO:0000353"/>
    <property type="project" value="dictyBase"/>
</dbReference>
<dbReference type="GO" id="GO:0007015">
    <property type="term" value="P:actin filament organization"/>
    <property type="evidence" value="ECO:0000315"/>
    <property type="project" value="dictyBase"/>
</dbReference>
<dbReference type="GO" id="GO:0000902">
    <property type="term" value="P:cell morphogenesis"/>
    <property type="evidence" value="ECO:0000315"/>
    <property type="project" value="dictyBase"/>
</dbReference>
<dbReference type="GO" id="GO:0048870">
    <property type="term" value="P:cell motility"/>
    <property type="evidence" value="ECO:0000315"/>
    <property type="project" value="dictyBase"/>
</dbReference>
<dbReference type="GO" id="GO:0030866">
    <property type="term" value="P:cortical actin cytoskeleton organization"/>
    <property type="evidence" value="ECO:0000315"/>
    <property type="project" value="dictyBase"/>
</dbReference>
<dbReference type="GO" id="GO:0044351">
    <property type="term" value="P:macropinocytosis"/>
    <property type="evidence" value="ECO:0000315"/>
    <property type="project" value="dictyBase"/>
</dbReference>
<dbReference type="GO" id="GO:0030336">
    <property type="term" value="P:negative regulation of cell migration"/>
    <property type="evidence" value="ECO:0000315"/>
    <property type="project" value="dictyBase"/>
</dbReference>
<dbReference type="GO" id="GO:2000146">
    <property type="term" value="P:negative regulation of cell motility"/>
    <property type="evidence" value="ECO:0000315"/>
    <property type="project" value="dictyBase"/>
</dbReference>
<dbReference type="GO" id="GO:0006907">
    <property type="term" value="P:pinocytosis"/>
    <property type="evidence" value="ECO:0000315"/>
    <property type="project" value="dictyBase"/>
</dbReference>
<dbReference type="GO" id="GO:0045807">
    <property type="term" value="P:positive regulation of endocytosis"/>
    <property type="evidence" value="ECO:0000315"/>
    <property type="project" value="dictyBase"/>
</dbReference>
<dbReference type="GO" id="GO:1905303">
    <property type="term" value="P:positive regulation of macropinocytosis"/>
    <property type="evidence" value="ECO:0000315"/>
    <property type="project" value="dictyBase"/>
</dbReference>
<dbReference type="GO" id="GO:0050766">
    <property type="term" value="P:positive regulation of phagocytosis"/>
    <property type="evidence" value="ECO:0000315"/>
    <property type="project" value="dictyBase"/>
</dbReference>
<dbReference type="GO" id="GO:0042127">
    <property type="term" value="P:regulation of cell population proliferation"/>
    <property type="evidence" value="ECO:0000315"/>
    <property type="project" value="dictyBase"/>
</dbReference>
<dbReference type="GO" id="GO:0019953">
    <property type="term" value="P:sexual reproduction"/>
    <property type="evidence" value="ECO:0000270"/>
    <property type="project" value="dictyBase"/>
</dbReference>
<dbReference type="GO" id="GO:0007165">
    <property type="term" value="P:signal transduction"/>
    <property type="evidence" value="ECO:0007669"/>
    <property type="project" value="InterPro"/>
</dbReference>
<dbReference type="CDD" id="cd00876">
    <property type="entry name" value="Ras"/>
    <property type="match status" value="1"/>
</dbReference>
<dbReference type="FunFam" id="3.40.50.300:FF:002309">
    <property type="entry name" value="Ras-related protein Ral-A"/>
    <property type="match status" value="1"/>
</dbReference>
<dbReference type="Gene3D" id="3.40.50.300">
    <property type="entry name" value="P-loop containing nucleotide triphosphate hydrolases"/>
    <property type="match status" value="1"/>
</dbReference>
<dbReference type="InterPro" id="IPR027417">
    <property type="entry name" value="P-loop_NTPase"/>
</dbReference>
<dbReference type="InterPro" id="IPR005225">
    <property type="entry name" value="Small_GTP-bd"/>
</dbReference>
<dbReference type="InterPro" id="IPR001806">
    <property type="entry name" value="Small_GTPase"/>
</dbReference>
<dbReference type="InterPro" id="IPR020849">
    <property type="entry name" value="Small_GTPase_Ras-type"/>
</dbReference>
<dbReference type="NCBIfam" id="TIGR00231">
    <property type="entry name" value="small_GTP"/>
    <property type="match status" value="1"/>
</dbReference>
<dbReference type="PANTHER" id="PTHR24070">
    <property type="entry name" value="RAS, DI-RAS, AND RHEB FAMILY MEMBERS OF SMALL GTPASE SUPERFAMILY"/>
    <property type="match status" value="1"/>
</dbReference>
<dbReference type="Pfam" id="PF00071">
    <property type="entry name" value="Ras"/>
    <property type="match status" value="1"/>
</dbReference>
<dbReference type="PRINTS" id="PR00449">
    <property type="entry name" value="RASTRNSFRMNG"/>
</dbReference>
<dbReference type="SMART" id="SM00175">
    <property type="entry name" value="RAB"/>
    <property type="match status" value="1"/>
</dbReference>
<dbReference type="SMART" id="SM00176">
    <property type="entry name" value="RAN"/>
    <property type="match status" value="1"/>
</dbReference>
<dbReference type="SMART" id="SM00173">
    <property type="entry name" value="RAS"/>
    <property type="match status" value="1"/>
</dbReference>
<dbReference type="SMART" id="SM00174">
    <property type="entry name" value="RHO"/>
    <property type="match status" value="1"/>
</dbReference>
<dbReference type="SUPFAM" id="SSF52540">
    <property type="entry name" value="P-loop containing nucleoside triphosphate hydrolases"/>
    <property type="match status" value="1"/>
</dbReference>
<dbReference type="PROSITE" id="PS51421">
    <property type="entry name" value="RAS"/>
    <property type="match status" value="1"/>
</dbReference>
<feature type="chain" id="PRO_0000082664" description="Ras-like protein rasS">
    <location>
        <begin position="1"/>
        <end position="191"/>
    </location>
</feature>
<feature type="propeptide" id="PRO_0000281312" description="Removed in mature form" evidence="1">
    <location>
        <begin position="192"/>
        <end position="194"/>
    </location>
</feature>
<feature type="region of interest" description="Disordered" evidence="3">
    <location>
        <begin position="168"/>
        <end position="194"/>
    </location>
</feature>
<feature type="short sequence motif" description="Effector region">
    <location>
        <begin position="32"/>
        <end position="40"/>
    </location>
</feature>
<feature type="compositionally biased region" description="Low complexity" evidence="3">
    <location>
        <begin position="169"/>
        <end position="180"/>
    </location>
</feature>
<feature type="binding site" evidence="1">
    <location>
        <begin position="10"/>
        <end position="17"/>
    </location>
    <ligand>
        <name>GTP</name>
        <dbReference type="ChEBI" id="CHEBI:37565"/>
    </ligand>
</feature>
<feature type="binding site" evidence="1">
    <location>
        <begin position="57"/>
        <end position="61"/>
    </location>
    <ligand>
        <name>GTP</name>
        <dbReference type="ChEBI" id="CHEBI:37565"/>
    </ligand>
</feature>
<feature type="binding site" evidence="1">
    <location>
        <begin position="116"/>
        <end position="119"/>
    </location>
    <ligand>
        <name>GTP</name>
        <dbReference type="ChEBI" id="CHEBI:37565"/>
    </ligand>
</feature>
<feature type="modified residue" description="Cysteine methyl ester" evidence="1">
    <location>
        <position position="191"/>
    </location>
</feature>
<feature type="lipid moiety-binding region" description="S-geranylgeranyl cysteine" evidence="1">
    <location>
        <position position="191"/>
    </location>
</feature>
<proteinExistence type="evidence at transcript level"/>
<organism>
    <name type="scientific">Dictyostelium discoideum</name>
    <name type="common">Social amoeba</name>
    <dbReference type="NCBI Taxonomy" id="44689"/>
    <lineage>
        <taxon>Eukaryota</taxon>
        <taxon>Amoebozoa</taxon>
        <taxon>Evosea</taxon>
        <taxon>Eumycetozoa</taxon>
        <taxon>Dictyostelia</taxon>
        <taxon>Dictyosteliales</taxon>
        <taxon>Dictyosteliaceae</taxon>
        <taxon>Dictyostelium</taxon>
    </lineage>
</organism>
<sequence length="194" mass="22266">MFNFKLVLVGPGGVGKSCLTIQFIAQKFVDEYDPTLEDSYRKQTTVDGEECLLDIYDTAGQEDFSAVRDQYMRTGEGFLCVYSITYLQSFKEIHRLHNHLLKVKDLDSVPFVLVGNKCDLNEYREVSTAEGEELAKKLNCKFLETSAKERINVSESFYELVREVKKARQSNQHSNSQEQNTDQPIKKKKSCNLL</sequence>
<gene>
    <name type="primary">rasS</name>
    <name type="ORF">DDB_G0283537</name>
</gene>
<accession>P32254</accession>
<accession>Q54QW0</accession>
<name>RASS_DICDI</name>
<evidence type="ECO:0000250" key="1"/>
<evidence type="ECO:0000250" key="2">
    <source>
        <dbReference type="UniProtKB" id="P32253"/>
    </source>
</evidence>
<evidence type="ECO:0000256" key="3">
    <source>
        <dbReference type="SAM" id="MobiDB-lite"/>
    </source>
</evidence>
<evidence type="ECO:0000305" key="4"/>
<keyword id="KW-1003">Cell membrane</keyword>
<keyword id="KW-0342">GTP-binding</keyword>
<keyword id="KW-0378">Hydrolase</keyword>
<keyword id="KW-0449">Lipoprotein</keyword>
<keyword id="KW-0472">Membrane</keyword>
<keyword id="KW-0488">Methylation</keyword>
<keyword id="KW-0547">Nucleotide-binding</keyword>
<keyword id="KW-0636">Prenylation</keyword>
<keyword id="KW-1185">Reference proteome</keyword>
<comment type="function">
    <text evidence="2">Ras proteins bind GDP/GTP and possess intrinsic GTPase activity.</text>
</comment>
<comment type="catalytic activity">
    <reaction evidence="2">
        <text>GTP + H2O = GDP + phosphate + H(+)</text>
        <dbReference type="Rhea" id="RHEA:19669"/>
        <dbReference type="ChEBI" id="CHEBI:15377"/>
        <dbReference type="ChEBI" id="CHEBI:15378"/>
        <dbReference type="ChEBI" id="CHEBI:37565"/>
        <dbReference type="ChEBI" id="CHEBI:43474"/>
        <dbReference type="ChEBI" id="CHEBI:58189"/>
        <dbReference type="EC" id="3.6.5.2"/>
    </reaction>
</comment>
<comment type="subcellular location">
    <subcellularLocation>
        <location evidence="4">Cell membrane</location>
        <topology evidence="4">Lipid-anchor</topology>
        <orientation evidence="4">Cytoplasmic side</orientation>
    </subcellularLocation>
</comment>
<comment type="similarity">
    <text evidence="4">Belongs to the small GTPase superfamily. Ras family.</text>
</comment>
<reference key="1">
    <citation type="journal article" date="1994" name="Oncogene">
        <title>Isolation of two novel ras genes in Dictyostelium discoideum; evidence for a complex, developmentally regulated ras gene subfamily.</title>
        <authorList>
            <person name="Daniel J.M."/>
            <person name="Bush J."/>
            <person name="Cardelli J."/>
            <person name="Spiegelman G.B."/>
            <person name="Weeks G."/>
        </authorList>
    </citation>
    <scope>NUCLEOTIDE SEQUENCE [MRNA]</scope>
</reference>
<reference key="2">
    <citation type="journal article" date="2005" name="Nature">
        <title>The genome of the social amoeba Dictyostelium discoideum.</title>
        <authorList>
            <person name="Eichinger L."/>
            <person name="Pachebat J.A."/>
            <person name="Gloeckner G."/>
            <person name="Rajandream M.A."/>
            <person name="Sucgang R."/>
            <person name="Berriman M."/>
            <person name="Song J."/>
            <person name="Olsen R."/>
            <person name="Szafranski K."/>
            <person name="Xu Q."/>
            <person name="Tunggal B."/>
            <person name="Kummerfeld S."/>
            <person name="Madera M."/>
            <person name="Konfortov B.A."/>
            <person name="Rivero F."/>
            <person name="Bankier A.T."/>
            <person name="Lehmann R."/>
            <person name="Hamlin N."/>
            <person name="Davies R."/>
            <person name="Gaudet P."/>
            <person name="Fey P."/>
            <person name="Pilcher K."/>
            <person name="Chen G."/>
            <person name="Saunders D."/>
            <person name="Sodergren E.J."/>
            <person name="Davis P."/>
            <person name="Kerhornou A."/>
            <person name="Nie X."/>
            <person name="Hall N."/>
            <person name="Anjard C."/>
            <person name="Hemphill L."/>
            <person name="Bason N."/>
            <person name="Farbrother P."/>
            <person name="Desany B."/>
            <person name="Just E."/>
            <person name="Morio T."/>
            <person name="Rost R."/>
            <person name="Churcher C.M."/>
            <person name="Cooper J."/>
            <person name="Haydock S."/>
            <person name="van Driessche N."/>
            <person name="Cronin A."/>
            <person name="Goodhead I."/>
            <person name="Muzny D.M."/>
            <person name="Mourier T."/>
            <person name="Pain A."/>
            <person name="Lu M."/>
            <person name="Harper D."/>
            <person name="Lindsay R."/>
            <person name="Hauser H."/>
            <person name="James K.D."/>
            <person name="Quiles M."/>
            <person name="Madan Babu M."/>
            <person name="Saito T."/>
            <person name="Buchrieser C."/>
            <person name="Wardroper A."/>
            <person name="Felder M."/>
            <person name="Thangavelu M."/>
            <person name="Johnson D."/>
            <person name="Knights A."/>
            <person name="Loulseged H."/>
            <person name="Mungall K.L."/>
            <person name="Oliver K."/>
            <person name="Price C."/>
            <person name="Quail M.A."/>
            <person name="Urushihara H."/>
            <person name="Hernandez J."/>
            <person name="Rabbinowitsch E."/>
            <person name="Steffen D."/>
            <person name="Sanders M."/>
            <person name="Ma J."/>
            <person name="Kohara Y."/>
            <person name="Sharp S."/>
            <person name="Simmonds M.N."/>
            <person name="Spiegler S."/>
            <person name="Tivey A."/>
            <person name="Sugano S."/>
            <person name="White B."/>
            <person name="Walker D."/>
            <person name="Woodward J.R."/>
            <person name="Winckler T."/>
            <person name="Tanaka Y."/>
            <person name="Shaulsky G."/>
            <person name="Schleicher M."/>
            <person name="Weinstock G.M."/>
            <person name="Rosenthal A."/>
            <person name="Cox E.C."/>
            <person name="Chisholm R.L."/>
            <person name="Gibbs R.A."/>
            <person name="Loomis W.F."/>
            <person name="Platzer M."/>
            <person name="Kay R.R."/>
            <person name="Williams J.G."/>
            <person name="Dear P.H."/>
            <person name="Noegel A.A."/>
            <person name="Barrell B.G."/>
            <person name="Kuspa A."/>
        </authorList>
    </citation>
    <scope>NUCLEOTIDE SEQUENCE [LARGE SCALE GENOMIC DNA]</scope>
    <source>
        <strain>AX4</strain>
    </source>
</reference>